<feature type="chain" id="PRO_0000445602" description="Enniatin synthetase">
    <location>
        <begin position="1"/>
        <end position="3132"/>
    </location>
</feature>
<feature type="domain" description="Carrier 1" evidence="2 14">
    <location>
        <begin position="1010"/>
        <end position="1086"/>
    </location>
</feature>
<feature type="domain" description="Carrier 2" evidence="2 14">
    <location>
        <begin position="2504"/>
        <end position="2578"/>
    </location>
</feature>
<feature type="domain" description="Carrier 3" evidence="2 14">
    <location>
        <begin position="2598"/>
        <end position="2672"/>
    </location>
</feature>
<feature type="region of interest" description="Condensation 1" evidence="1 14">
    <location>
        <begin position="53"/>
        <end position="466"/>
    </location>
</feature>
<feature type="region of interest" description="Disordered" evidence="3">
    <location>
        <begin position="186"/>
        <end position="212"/>
    </location>
</feature>
<feature type="region of interest" description="Adenylation 1" evidence="1 14">
    <location>
        <begin position="495"/>
        <end position="887"/>
    </location>
</feature>
<feature type="region of interest" description="Disordered" evidence="3">
    <location>
        <begin position="994"/>
        <end position="1013"/>
    </location>
</feature>
<feature type="region of interest" description="Condensation 2" evidence="1 14">
    <location>
        <begin position="1105"/>
        <end position="1534"/>
    </location>
</feature>
<feature type="region of interest" description="Adenylation 2" evidence="1 14">
    <location>
        <begin position="1563"/>
        <end position="1960"/>
    </location>
</feature>
<feature type="region of interest" description="S-adenosyl-L-methionine-dependent N-methyltransferase" evidence="1 14">
    <location>
        <begin position="2021"/>
        <end position="2177"/>
    </location>
</feature>
<feature type="region of interest" description="Condensation 3" evidence="1 14">
    <location>
        <begin position="2719"/>
        <end position="3124"/>
    </location>
</feature>
<feature type="modified residue" description="O-(pantetheine 4'-phosphoryl)serine" evidence="2">
    <location>
        <position position="1047"/>
    </location>
</feature>
<feature type="modified residue" description="O-(pantetheine 4'-phosphoryl)serine" evidence="2">
    <location>
        <position position="2538"/>
    </location>
</feature>
<feature type="modified residue" description="O-(pantetheine 4'-phosphoryl)serine" evidence="2">
    <location>
        <position position="2632"/>
    </location>
</feature>
<comment type="function">
    <text evidence="7 8 9">Nonribosomal peptide synthetase that synthesizes enniatin by coupling three D-hydroxycarboxylic acids and three L-amino acids via amide and ester bonds in an alternating fashion (PubMed:25398283, PubMed:28946884, PubMed:28955446). Whereas ESYN1 can accept different amino acids as precursors (L-valine, L-isoleucine or L-leucine), only one species of D-hydroxycarboxylic acid can be found in natural enniatin isolates (D-hydroxyisovaleric acid, D-Hiv) (PubMed:25398283, PubMed:28955446). D-Hiv stems from L-valine deanimation by a valine aminotransferase to 2-keto-isovaleric acid (2-Kiv), which becomes subsequently reduced by a keto-isovaleric acid reductase (KivR) to D-Hiv (PubMed:25398283, PubMed:28946884, PubMed:28955446).</text>
</comment>
<comment type="cofactor">
    <cofactor evidence="13">
        <name>pantetheine 4'-phosphate</name>
        <dbReference type="ChEBI" id="CHEBI:47942"/>
    </cofactor>
    <text evidence="13">Binds 6 phosphopantetheines covalently.</text>
</comment>
<comment type="pathway">
    <text evidence="7 8 9">Antibiotic biosynthesis; enniatin biosynthesis.</text>
</comment>
<comment type="domain">
    <text evidence="13 14">NRP synthetases are composed of discrete domains (adenylation (A), thiolation (T) or peptidyl carrier protein (PCP) and condensation (C) domains) which when grouped together are referred to as a single module. Each module is responsible for the recognition (via the A domain) and incorporation of a single amino acid into the growing peptide product. Thus, an NRP synthetase is generally composed of one or more modules and can terminate in a thioesterase domain (TE) that releases the newly synthesized peptide from the enzyme. Occasionally, additional domains required for further modifications are also present (Probable). Enniatin synthetase has the C1-A1-T1-C2-A2-MT-T2a-T2b-C3 domain organization (Probable). The precursors D-hydroxycarboxylic acids and L-amino acids become activated at the A1 and the A2 domains. N-methylation of the amino acid takes place at the MT-domain. The building blocks are transferred from one module to another by means of T-domains and are ultimately stored at the waiting position T2b. Condensation of the building blocks and final cyclization and release from the enzyme is catalyzed by the C-domains (Probable).</text>
</comment>
<comment type="biotechnology">
    <text evidence="4 5 6 10">Enniatins have antimicrobial, antiviral and cytotoxic properties (PubMed:16562855, PubMed:17326668, PubMed:9170286). The bioactivity of enniatins can be linked to their inhibition of drug efflux pumps (PubMed:15707993).</text>
</comment>
<comment type="similarity">
    <text evidence="13">Belongs to the NRP synthetase family.</text>
</comment>
<dbReference type="EC" id="6.1.2.-" evidence="14"/>
<dbReference type="EC" id="2.1.1.-" evidence="14"/>
<dbReference type="EMBL" id="KP000028">
    <property type="protein sequence ID" value="AIY26286.1"/>
    <property type="molecule type" value="Genomic_DNA"/>
</dbReference>
<dbReference type="SMR" id="A0A0A1EA36"/>
<dbReference type="VEuPathDB" id="FungiDB:FOC1_g10003336"/>
<dbReference type="VEuPathDB" id="FungiDB:FOC4_g10007672"/>
<dbReference type="VEuPathDB" id="FungiDB:FOIG_15793"/>
<dbReference type="VEuPathDB" id="FungiDB:FOMG_14063"/>
<dbReference type="VEuPathDB" id="FungiDB:FOXG_11847"/>
<dbReference type="VEuPathDB" id="FungiDB:FOZG_11978"/>
<dbReference type="VEuPathDB" id="FungiDB:HZS61_016870"/>
<dbReference type="UniPathway" id="UPA00234"/>
<dbReference type="GO" id="GO:0005737">
    <property type="term" value="C:cytoplasm"/>
    <property type="evidence" value="ECO:0007669"/>
    <property type="project" value="TreeGrafter"/>
</dbReference>
<dbReference type="GO" id="GO:0016853">
    <property type="term" value="F:isomerase activity"/>
    <property type="evidence" value="ECO:0007669"/>
    <property type="project" value="UniProtKB-KW"/>
</dbReference>
<dbReference type="GO" id="GO:0016874">
    <property type="term" value="F:ligase activity"/>
    <property type="evidence" value="ECO:0007669"/>
    <property type="project" value="UniProtKB-KW"/>
</dbReference>
<dbReference type="GO" id="GO:0031177">
    <property type="term" value="F:phosphopantetheine binding"/>
    <property type="evidence" value="ECO:0007669"/>
    <property type="project" value="InterPro"/>
</dbReference>
<dbReference type="GO" id="GO:0008757">
    <property type="term" value="F:S-adenosylmethionine-dependent methyltransferase activity"/>
    <property type="evidence" value="ECO:0007669"/>
    <property type="project" value="InterPro"/>
</dbReference>
<dbReference type="GO" id="GO:0043041">
    <property type="term" value="P:amino acid activation for nonribosomal peptide biosynthetic process"/>
    <property type="evidence" value="ECO:0007669"/>
    <property type="project" value="TreeGrafter"/>
</dbReference>
<dbReference type="GO" id="GO:0046585">
    <property type="term" value="P:enniatin biosynthetic process"/>
    <property type="evidence" value="ECO:0007669"/>
    <property type="project" value="UniProtKB-UniPathway"/>
</dbReference>
<dbReference type="GO" id="GO:0032259">
    <property type="term" value="P:methylation"/>
    <property type="evidence" value="ECO:0007669"/>
    <property type="project" value="UniProtKB-KW"/>
</dbReference>
<dbReference type="GO" id="GO:0044550">
    <property type="term" value="P:secondary metabolite biosynthetic process"/>
    <property type="evidence" value="ECO:0007669"/>
    <property type="project" value="TreeGrafter"/>
</dbReference>
<dbReference type="CDD" id="cd05930">
    <property type="entry name" value="A_NRPS"/>
    <property type="match status" value="1"/>
</dbReference>
<dbReference type="CDD" id="cd05918">
    <property type="entry name" value="A_NRPS_SidN3_like"/>
    <property type="match status" value="1"/>
</dbReference>
<dbReference type="CDD" id="cd02440">
    <property type="entry name" value="AdoMet_MTases"/>
    <property type="match status" value="1"/>
</dbReference>
<dbReference type="CDD" id="cd19542">
    <property type="entry name" value="CT_NRPS-like"/>
    <property type="match status" value="1"/>
</dbReference>
<dbReference type="CDD" id="cd19545">
    <property type="entry name" value="FUM14_C_NRPS-like"/>
    <property type="match status" value="1"/>
</dbReference>
<dbReference type="CDD" id="cd19531">
    <property type="entry name" value="LCL_NRPS-like"/>
    <property type="match status" value="1"/>
</dbReference>
<dbReference type="FunFam" id="2.30.38.10:FF:000013">
    <property type="entry name" value="Enniatin synthase"/>
    <property type="match status" value="1"/>
</dbReference>
<dbReference type="FunFam" id="3.30.300.30:FF:000084">
    <property type="entry name" value="Enniatin synthase"/>
    <property type="match status" value="1"/>
</dbReference>
<dbReference type="FunFam" id="3.30.300.30:FF:000105">
    <property type="entry name" value="Enniatin synthase"/>
    <property type="match status" value="1"/>
</dbReference>
<dbReference type="FunFam" id="3.40.50.150:FF:000709">
    <property type="entry name" value="Enniatin synthase"/>
    <property type="match status" value="1"/>
</dbReference>
<dbReference type="FunFam" id="3.30.300.30:FF:000015">
    <property type="entry name" value="Nonribosomal peptide synthase SidD"/>
    <property type="match status" value="1"/>
</dbReference>
<dbReference type="Gene3D" id="3.30.300.30">
    <property type="match status" value="3"/>
</dbReference>
<dbReference type="Gene3D" id="3.40.50.980">
    <property type="match status" value="2"/>
</dbReference>
<dbReference type="Gene3D" id="1.10.1200.10">
    <property type="entry name" value="ACP-like"/>
    <property type="match status" value="3"/>
</dbReference>
<dbReference type="Gene3D" id="3.30.559.10">
    <property type="entry name" value="Chloramphenicol acetyltransferase-like domain"/>
    <property type="match status" value="3"/>
</dbReference>
<dbReference type="Gene3D" id="2.30.38.10">
    <property type="entry name" value="Luciferase, Domain 3"/>
    <property type="match status" value="1"/>
</dbReference>
<dbReference type="Gene3D" id="3.40.50.12780">
    <property type="entry name" value="N-terminal domain of ligase-like"/>
    <property type="match status" value="1"/>
</dbReference>
<dbReference type="Gene3D" id="3.30.559.30">
    <property type="entry name" value="Nonribosomal peptide synthetase, condensation domain"/>
    <property type="match status" value="3"/>
</dbReference>
<dbReference type="Gene3D" id="3.40.50.150">
    <property type="entry name" value="Vaccinia Virus protein VP39"/>
    <property type="match status" value="1"/>
</dbReference>
<dbReference type="InterPro" id="IPR010071">
    <property type="entry name" value="AA_adenyl_dom"/>
</dbReference>
<dbReference type="InterPro" id="IPR036736">
    <property type="entry name" value="ACP-like_sf"/>
</dbReference>
<dbReference type="InterPro" id="IPR045851">
    <property type="entry name" value="AMP-bd_C_sf"/>
</dbReference>
<dbReference type="InterPro" id="IPR020845">
    <property type="entry name" value="AMP-binding_CS"/>
</dbReference>
<dbReference type="InterPro" id="IPR000873">
    <property type="entry name" value="AMP-dep_synth/lig_dom"/>
</dbReference>
<dbReference type="InterPro" id="IPR042099">
    <property type="entry name" value="ANL_N_sf"/>
</dbReference>
<dbReference type="InterPro" id="IPR023213">
    <property type="entry name" value="CAT-like_dom_sf"/>
</dbReference>
<dbReference type="InterPro" id="IPR001242">
    <property type="entry name" value="Condensatn"/>
</dbReference>
<dbReference type="InterPro" id="IPR013216">
    <property type="entry name" value="Methyltransf_11"/>
</dbReference>
<dbReference type="InterPro" id="IPR020806">
    <property type="entry name" value="PKS_PP-bd"/>
</dbReference>
<dbReference type="InterPro" id="IPR009081">
    <property type="entry name" value="PP-bd_ACP"/>
</dbReference>
<dbReference type="InterPro" id="IPR006162">
    <property type="entry name" value="Ppantetheine_attach_site"/>
</dbReference>
<dbReference type="InterPro" id="IPR029063">
    <property type="entry name" value="SAM-dependent_MTases_sf"/>
</dbReference>
<dbReference type="NCBIfam" id="TIGR01733">
    <property type="entry name" value="AA-adenyl-dom"/>
    <property type="match status" value="2"/>
</dbReference>
<dbReference type="PANTHER" id="PTHR45527:SF16">
    <property type="entry name" value="NONRIBOSOMAL PEPTIDE SYNTHASE ATNA-RELATED"/>
    <property type="match status" value="1"/>
</dbReference>
<dbReference type="PANTHER" id="PTHR45527">
    <property type="entry name" value="NONRIBOSOMAL PEPTIDE SYNTHETASE"/>
    <property type="match status" value="1"/>
</dbReference>
<dbReference type="Pfam" id="PF00501">
    <property type="entry name" value="AMP-binding"/>
    <property type="match status" value="2"/>
</dbReference>
<dbReference type="Pfam" id="PF00668">
    <property type="entry name" value="Condensation"/>
    <property type="match status" value="3"/>
</dbReference>
<dbReference type="Pfam" id="PF08241">
    <property type="entry name" value="Methyltransf_11"/>
    <property type="match status" value="1"/>
</dbReference>
<dbReference type="Pfam" id="PF00550">
    <property type="entry name" value="PP-binding"/>
    <property type="match status" value="3"/>
</dbReference>
<dbReference type="SMART" id="SM00823">
    <property type="entry name" value="PKS_PP"/>
    <property type="match status" value="3"/>
</dbReference>
<dbReference type="SUPFAM" id="SSF56801">
    <property type="entry name" value="Acetyl-CoA synthetase-like"/>
    <property type="match status" value="2"/>
</dbReference>
<dbReference type="SUPFAM" id="SSF47336">
    <property type="entry name" value="ACP-like"/>
    <property type="match status" value="3"/>
</dbReference>
<dbReference type="SUPFAM" id="SSF52777">
    <property type="entry name" value="CoA-dependent acyltransferases"/>
    <property type="match status" value="6"/>
</dbReference>
<dbReference type="SUPFAM" id="SSF53335">
    <property type="entry name" value="S-adenosyl-L-methionine-dependent methyltransferases"/>
    <property type="match status" value="1"/>
</dbReference>
<dbReference type="PROSITE" id="PS00455">
    <property type="entry name" value="AMP_BINDING"/>
    <property type="match status" value="2"/>
</dbReference>
<dbReference type="PROSITE" id="PS50075">
    <property type="entry name" value="CARRIER"/>
    <property type="match status" value="3"/>
</dbReference>
<dbReference type="PROSITE" id="PS00012">
    <property type="entry name" value="PHOSPHOPANTETHEINE"/>
    <property type="match status" value="3"/>
</dbReference>
<accession>A0A0A1EA36</accession>
<evidence type="ECO:0000255" key="1"/>
<evidence type="ECO:0000255" key="2">
    <source>
        <dbReference type="PROSITE-ProRule" id="PRU00258"/>
    </source>
</evidence>
<evidence type="ECO:0000256" key="3">
    <source>
        <dbReference type="SAM" id="MobiDB-lite"/>
    </source>
</evidence>
<evidence type="ECO:0000269" key="4">
    <source>
    </source>
</evidence>
<evidence type="ECO:0000269" key="5">
    <source>
    </source>
</evidence>
<evidence type="ECO:0000269" key="6">
    <source>
    </source>
</evidence>
<evidence type="ECO:0000269" key="7">
    <source>
    </source>
</evidence>
<evidence type="ECO:0000269" key="8">
    <source>
    </source>
</evidence>
<evidence type="ECO:0000269" key="9">
    <source>
    </source>
</evidence>
<evidence type="ECO:0000269" key="10">
    <source>
    </source>
</evidence>
<evidence type="ECO:0000303" key="11">
    <source>
    </source>
</evidence>
<evidence type="ECO:0000303" key="12">
    <source>
    </source>
</evidence>
<evidence type="ECO:0000305" key="13"/>
<evidence type="ECO:0000305" key="14">
    <source>
    </source>
</evidence>
<organism>
    <name type="scientific">Fusarium oxysporum</name>
    <name type="common">Fusarium vascular wilt</name>
    <dbReference type="NCBI Taxonomy" id="5507"/>
    <lineage>
        <taxon>Eukaryota</taxon>
        <taxon>Fungi</taxon>
        <taxon>Dikarya</taxon>
        <taxon>Ascomycota</taxon>
        <taxon>Pezizomycotina</taxon>
        <taxon>Sordariomycetes</taxon>
        <taxon>Hypocreomycetidae</taxon>
        <taxon>Hypocreales</taxon>
        <taxon>Nectriaceae</taxon>
        <taxon>Fusarium</taxon>
        <taxon>Fusarium oxysporum species complex</taxon>
    </lineage>
</organism>
<sequence length="3132" mass="346593">MSLHTPSDGQQDPALASKTLCEQISRALGLGQDKIENIFPGTPFQRDVIDCAADDKQRAVGHAVFEIPKDIDAARLAAAWKETVLHTPALRTCTFTSKSGDVLQVVLRDSFVFSWMSGPSVDLKEAVVQDEAAAALAGPRCNRFVLLEDPDTKERQLIWTFSHALVDSTFQERILRRVLKAYKDANDEHPRQFETPDSSQATPEEDLQPNPSKMLKIPQAADMDRAVEFWKDHLSGLNASAFPHLSSHLSMPHPDAKAEHRISYSSSAQQKMSSATICRTALAILLSRYTHSPEALFGIVTEQTPLLEEQLMLDGPTRTVVPIRVSCASEQSVSDIMSTIDSYDQTMRQFAHAGLRNIASAGDDESAACGFQTVLLVSDGDAQPASTWEILKKTEEPEGFIPCTNRALLLSCQMTSSGAHLTARYDQSIIDAEQMARLLRQLGHLIQNLQTSTDLPVEKVDMMTQEDWLEIERWNSDSIDAQDTLIHSEMLKWTSQSPNKAAVAAWDGEWTYAELDNVSSRLAQHINSIDLGKEHAIVPIYFEKSKWVVASMLAVLKAGHAFTLIDPSDPPARTAQVVQQTSATVALTSKLHRETVQSTVGRCIVVDEEFVKSLPQSSELSASVKAHDLAYVIFTSGSTGIPKGIMIEHRSFSSCAIKFGPALGITSDTRALQFGSHAFGACILEIMTTLIHGGCVCIPSDDDRMNNVLEFINRTNVNWVMATPSYMGTFQPEVVPGLKTLVLVGEQMSASVNEVWAPRVQLLNGYGQSESSSICCVAKISPGSSEPNNIGHAVGAHSWIVDPEDPNRLAPIGAVGELVIESAGIARDYIVAPTQDKSPFIKTAPTWYPAKQLPDGFKIYRTGDLACYASDGSIVCLGRMDSQVKIRGQRVELGAVETHLRQQMPDDMTIVVEAVKFSDSSSTTVLTAFLIGAGEKNSHILDQRATREINAKMEQVLPRHSIPAFYISMNNLPQTATGKVDRRKLRIMGSKILSQKTHSTPSQQSQAAISSGTDTETKLESIWITSLDLEPGSANMSATFFEMGGNSIIAIKMVNMARSNGIELKVSDIYQNPTLAGLKAIVIGTSLPYSLIPKVTRQGPVSEQSYAQNRMWFLDQLSEGASWYLIPFAVRMRGPVDVDALTRALLALEQRHETLRTTFENQDGVGVQIIHDRLSKELQVIDALDGDEGGLKTLYKVETTTFDITSEAGWSSTLIRLGKDDHILSIVMHHIISDGWSIDVLRRELIQLYAAALQGKDPSSALTPLPIQYSDFAVWQKQEAQAAEHERQLQYWKKQLADSSPAKIPTDFPRPDLLSGDAGVVPVAIDGELYQKLRGFCNKHNSTAFSILLAAFRAAHYRLTAVDDAVIGIPIANRNRWELENMIGFFVNTQCMRIAVDETDTFESLVRQVRSTTTAAFAHEDVPFERVVSALQPGHRDLSRTPLAQIMFAVHSQKDLGRFELEGIQSEPIASKAYTRFDVEFHLFQQADGLKGSCNFATDLFKPETIQNVVSVFFQILRHGLDQPETCISVLPLTDGVEELRRLDLLEIKRTNYPRDSSVVDVFREQAAANPEVIAVTDSSSRLTYAELDNKSELLSRWLRRRNLTPETLVSVLAPRSCETIVAYVGILKANLAYLPLDVRSPVTRMKDILSSVSGNTIVLMGSGVEDPGFDLPQLELVRITDTFDETIEDVQDSPQPSATSLAYVVFTSGSTGKPKGVMIEHRAIVRLVKSDNFPGFPSPARMSNVFNPAFDGAIWEINWMLLNGGTVVCIDYLTTLDGKELAAVFAKERVNAAFFAPAMLKLYLVDAREALKNLDFLIVGGERFDTKEAVEAMPLVRGKIANIYGPTEAGIISTCYNIPKDEAYTNGVPIGGSIYNSGAYVMDPNQQLVGLGVMGELVVTGDGVGRGYTNPELNKNRFIDITIEGKTFKAYRTGDRMRARVGDGLLEFFGRMDNQFKIRGNRIEAGEVESAMLSLKNVLNAAIVVRGGGEDEGPLEMVGFIVADDKNDTTEEEETGNQVEGWQDHFESGMYSDISTAVDQSAIGNDFKGWTSMYDGKDIDKGEMQEWLDDAIHTLHNGQIPRDVLEIGTGSGMILFNLNPGLNSYVGLDPSKSAVEFVNRAVESSPKFAGKAKVHVGMATDVNKLGEVHPDLVVFNSVVQYFPTPEYLAEVIDGLIAIPSVKRIFLGDIRSYATNGHFLAARAIHTLGTNNNATKDRVRQKIQELEDREEEFLVEPAFFTTLKERRPDVVKHVEIIPKNMKATNELSAYRYTAVVHLRDETDEPVYHIEKDSWVDFEAKQMDKTALLDHLRLSKDAMSVAVSNITYAHTAFERRIVESLDEDSKDDTKGTLDGAAWLSAVRSEAENRASLTVPDILEIAKEAGFRVEVSAARQWSQSGALDAVFHHFPPSSTDRTLIQFPTDNELRSSLTLANRPLQKLQRRRAALQVREKLQTLVPSYMVPPNIVVLDTMPLNTNGKIDRKELTRRARTLPKQQTAAPVPDFPISDIEITLCEEATEVFGMKVEISDHFFQLGGHSLLATKLISRIQHRLHVRVTVKDVFDSPVFADLAVIIRQGLAMQNPVAEGQDKQGWSSRVAPRTEVEKMLCEEFAAGLGVPVGITDNFFDLGGHSLMATKLAVRIGRRLDTAITVKDIFDYPVLFQLAKKLESSHSKSYEESGDDIQMADYTAFQLLDLEDPQDFVQSQIRPQLDSCYGTIQDVYPSTQMQKAFLFDPTTGEPRGLVPFYIDFPSNADAETLTKAIGALVDKLDMFRTVFLEAAGDLYQVVVEHLNLPIETIETEKNVNTATGDYLDVHGKDPVRLGHPCIQFAILKTASSVRVLLRMSHALYDGLSFEYIVRGLHVLYSGRNLPPPTQFARYMQYAAHSREEGYPFWREVLQNAPMTVLHDTNNGMSEQEMPASKAVHLSEVVNVPAQAIRNSTNTQATVFNTACALVLAKESGSQDVVFGRIVSGRQGLPVVWQDIIGPCTNAVPVHARVDDGNPQRIIRDLRDQYLRTLPFESLGFEEIKRNCTDWPEELTNFSVCVTYHNFEYHPESEVDNQKVEMGVLAKYVELSENEPLYDLAIAGEVEADGVNLKVTVVAKARLYNEARIRHVLEEVCKTFNGLNEAL</sequence>
<name>ESYN_FUSOX</name>
<protein>
    <recommendedName>
        <fullName evidence="11">Enniatin synthetase</fullName>
    </recommendedName>
    <alternativeName>
        <fullName evidence="11">Nonribosomal cyclopeptide synthetase ESYN1</fullName>
    </alternativeName>
    <domain>
        <recommendedName>
            <fullName evidence="14">Nonribosomal peptide synthetase</fullName>
            <ecNumber evidence="14">6.1.2.-</ecNumber>
        </recommendedName>
    </domain>
    <domain>
        <recommendedName>
            <fullName evidence="14">S-adenosyl-L-methionine-dependent N-methyltransferase</fullName>
            <ecNumber evidence="14">2.1.1.-</ecNumber>
        </recommendedName>
    </domain>
</protein>
<keyword id="KW-0413">Isomerase</keyword>
<keyword id="KW-0436">Ligase</keyword>
<keyword id="KW-0489">Methyltransferase</keyword>
<keyword id="KW-0511">Multifunctional enzyme</keyword>
<keyword id="KW-0596">Phosphopantetheine</keyword>
<keyword id="KW-0597">Phosphoprotein</keyword>
<keyword id="KW-0677">Repeat</keyword>
<keyword id="KW-0949">S-adenosyl-L-methionine</keyword>
<keyword id="KW-0808">Transferase</keyword>
<gene>
    <name evidence="12" type="primary">ESYN1</name>
    <name evidence="11" type="synonym">ESYN</name>
</gene>
<reference key="1">
    <citation type="journal article" date="2015" name="Appl. Microbiol. Biotechnol.">
        <title>Bacillus subtilis as heterologous host for the secretory production of the non-ribosomal cyclodepsipeptide enniatin.</title>
        <authorList>
            <person name="Zobel S."/>
            <person name="Kumpfmueller J."/>
            <person name="Suessmuth R.D."/>
            <person name="Schweder T."/>
        </authorList>
    </citation>
    <scope>NUCLEOTIDE SEQUENCE [GENOMIC DNA]</scope>
    <scope>FUNCTION</scope>
    <scope>DOMAIN</scope>
    <scope>PATHWAY</scope>
    <source>
        <strain>ETH 1536</strain>
    </source>
</reference>
<reference key="2">
    <citation type="journal article" date="1997" name="J. Nat. Prod.">
        <title>Isolation and characterization of new anti-HIV and cytotoxic leads from plants, marine, and microbial organisms.</title>
        <authorList>
            <person name="McKee T.C."/>
            <person name="Bokesch H.R."/>
            <person name="McCormick J.L."/>
            <person name="Rashid M.A."/>
            <person name="Spielvogel D."/>
            <person name="Gustafson K.R."/>
            <person name="Alavanja M.M."/>
            <person name="Cardelline J.H. II"/>
            <person name="Boyd M.R."/>
        </authorList>
    </citation>
    <scope>BIOTECHNOLOGY</scope>
</reference>
<reference key="3">
    <citation type="journal article" date="2005" name="Biochem. Biophys. Res. Commun.">
        <title>Enniatin has a new function as an inhibitor of Pdr5p, one of the ABC transporters in Saccharomyces cerevisiae.</title>
        <authorList>
            <person name="Hiraga K."/>
            <person name="Yamamoto S."/>
            <person name="Fukuda H."/>
            <person name="Hamanaka N."/>
            <person name="Oda K."/>
        </authorList>
    </citation>
    <scope>BIOTECHNOLOGY</scope>
</reference>
<reference key="4">
    <citation type="journal article" date="2006" name="J. Nat. Prod.">
        <title>N-Methyl-4-hydroxy-2-pyridinone analogues from Fusarium oxysporum.</title>
        <authorList>
            <person name="Jayasinghe L."/>
            <person name="Abbas H.K."/>
            <person name="Jacob M.R."/>
            <person name="Herath W.H."/>
            <person name="Nanayakkara N.P."/>
        </authorList>
    </citation>
    <scope>BIOTECHNOLOGY</scope>
</reference>
<reference key="5">
    <citation type="journal article" date="2007" name="Chem. Res. Toxicol.">
        <title>Enniatin exerts p53-dependent cytostatic and p53-independent cytotoxic activities against human cancer cells.</title>
        <authorList>
            <person name="Dornetshuber R."/>
            <person name="Heffeter P."/>
            <person name="Kamyar M.R."/>
            <person name="Peterbauer T."/>
            <person name="Berger W."/>
            <person name="Lemmens-Gruber R."/>
        </authorList>
    </citation>
    <scope>BIOTECHNOLOGY</scope>
</reference>
<reference key="6">
    <citation type="journal article" date="2014" name="Fungal Biol. Biotechnol.">
        <title>Engineering of Aspergillus niger for the production of secondary metabolites.</title>
        <authorList>
            <person name="Richter L."/>
            <person name="Wanka F."/>
            <person name="Boecker S."/>
            <person name="Storm D."/>
            <person name="Kurt T."/>
            <person name="Vural O."/>
            <person name="Suessmuth R."/>
            <person name="Meyer V."/>
        </authorList>
    </citation>
    <scope>FUNCTION</scope>
    <scope>DOMAIN</scope>
    <scope>PATHWAY</scope>
</reference>
<reference key="7">
    <citation type="journal article" date="2017" name="Microb. Cell Fact.">
        <title>Polycistronic gene expression in Aspergillus niger.</title>
        <authorList>
            <person name="Schuetze T."/>
            <person name="Meyer V."/>
        </authorList>
    </citation>
    <scope>FUNCTION</scope>
    <scope>PATHWAY</scope>
</reference>
<proteinExistence type="evidence at protein level"/>